<evidence type="ECO:0000255" key="1">
    <source>
        <dbReference type="HAMAP-Rule" id="MF_01385"/>
    </source>
</evidence>
<proteinExistence type="inferred from homology"/>
<sequence>MRTATITEFSSSYRSLPGLLHLLQFGDSALPIGGFSFSNGLESAIQQNLVHDKETLREFTLTAMNQAATSDRIALLTAHRAARADDRGALQVIDKAVFERKLNEETRLMTVRMGRKLCELSASIIDDRLNRDWLECIKTAETPGTHPVSLGLAFAALDVDGRDAFGAQQYGVATTILGAALRLMRVSFMDTQKILLEATSTVAPAYEEIADAGIEDMASFAPMVDILAAVHVKGHVRMFMN</sequence>
<comment type="function">
    <text evidence="1">Required for maturation of urease via the functional incorporation of the urease nickel metallocenter.</text>
</comment>
<comment type="subunit">
    <text evidence="1">UreD, UreF and UreG form a complex that acts as a GTP-hydrolysis-dependent molecular chaperone, activating the urease apoprotein by helping to assemble the nickel containing metallocenter of UreC. The UreE protein probably delivers the nickel.</text>
</comment>
<comment type="subcellular location">
    <subcellularLocation>
        <location evidence="1">Cytoplasm</location>
    </subcellularLocation>
</comment>
<comment type="similarity">
    <text evidence="1">Belongs to the UreF family.</text>
</comment>
<reference key="1">
    <citation type="journal article" date="2002" name="Proc. Natl. Acad. Sci. U.S.A.">
        <title>The genome sequence of the facultative intracellular pathogen Brucella melitensis.</title>
        <authorList>
            <person name="DelVecchio V.G."/>
            <person name="Kapatral V."/>
            <person name="Redkar R.J."/>
            <person name="Patra G."/>
            <person name="Mujer C."/>
            <person name="Los T."/>
            <person name="Ivanova N."/>
            <person name="Anderson I."/>
            <person name="Bhattacharyya A."/>
            <person name="Lykidis A."/>
            <person name="Reznik G."/>
            <person name="Jablonski L."/>
            <person name="Larsen N."/>
            <person name="D'Souza M."/>
            <person name="Bernal A."/>
            <person name="Mazur M."/>
            <person name="Goltsman E."/>
            <person name="Selkov E."/>
            <person name="Elzer P.H."/>
            <person name="Hagius S."/>
            <person name="O'Callaghan D."/>
            <person name="Letesson J.-J."/>
            <person name="Haselkorn R."/>
            <person name="Kyrpides N.C."/>
            <person name="Overbeek R."/>
        </authorList>
    </citation>
    <scope>NUCLEOTIDE SEQUENCE [LARGE SCALE GENOMIC DNA]</scope>
    <source>
        <strain>ATCC 23456 / CCUG 17765 / NCTC 10094 / 16M</strain>
    </source>
</reference>
<dbReference type="EMBL" id="AE008917">
    <property type="protein sequence ID" value="AAL51826.1"/>
    <property type="molecule type" value="Genomic_DNA"/>
</dbReference>
<dbReference type="PIR" id="AG3332">
    <property type="entry name" value="AG3332"/>
</dbReference>
<dbReference type="SMR" id="Q8YI00"/>
<dbReference type="KEGG" id="bme:BMEI0645"/>
<dbReference type="eggNOG" id="COG0830">
    <property type="taxonomic scope" value="Bacteria"/>
</dbReference>
<dbReference type="PhylomeDB" id="Q8YI00"/>
<dbReference type="Proteomes" id="UP000000419">
    <property type="component" value="Chromosome I"/>
</dbReference>
<dbReference type="GO" id="GO:0005737">
    <property type="term" value="C:cytoplasm"/>
    <property type="evidence" value="ECO:0007669"/>
    <property type="project" value="UniProtKB-SubCell"/>
</dbReference>
<dbReference type="GO" id="GO:0016151">
    <property type="term" value="F:nickel cation binding"/>
    <property type="evidence" value="ECO:0007669"/>
    <property type="project" value="UniProtKB-UniRule"/>
</dbReference>
<dbReference type="Gene3D" id="1.10.4190.10">
    <property type="entry name" value="Urease accessory protein UreF"/>
    <property type="match status" value="1"/>
</dbReference>
<dbReference type="HAMAP" id="MF_01385">
    <property type="entry name" value="UreF"/>
    <property type="match status" value="1"/>
</dbReference>
<dbReference type="InterPro" id="IPR002639">
    <property type="entry name" value="UreF"/>
</dbReference>
<dbReference type="InterPro" id="IPR038277">
    <property type="entry name" value="UreF_sf"/>
</dbReference>
<dbReference type="PANTHER" id="PTHR33620">
    <property type="entry name" value="UREASE ACCESSORY PROTEIN F"/>
    <property type="match status" value="1"/>
</dbReference>
<dbReference type="PANTHER" id="PTHR33620:SF1">
    <property type="entry name" value="UREASE ACCESSORY PROTEIN F"/>
    <property type="match status" value="1"/>
</dbReference>
<dbReference type="Pfam" id="PF01730">
    <property type="entry name" value="UreF"/>
    <property type="match status" value="1"/>
</dbReference>
<dbReference type="PIRSF" id="PIRSF009467">
    <property type="entry name" value="Ureas_acces_UreF"/>
    <property type="match status" value="1"/>
</dbReference>
<gene>
    <name evidence="1" type="primary">ureF1</name>
    <name type="ordered locus">BMEI0645</name>
</gene>
<protein>
    <recommendedName>
        <fullName evidence="1">Urease accessory protein UreF 1</fullName>
    </recommendedName>
</protein>
<feature type="chain" id="PRO_0000344090" description="Urease accessory protein UreF 1">
    <location>
        <begin position="1"/>
        <end position="241"/>
    </location>
</feature>
<name>UREF1_BRUME</name>
<keyword id="KW-0143">Chaperone</keyword>
<keyword id="KW-0963">Cytoplasm</keyword>
<keyword id="KW-0996">Nickel insertion</keyword>
<organism>
    <name type="scientific">Brucella melitensis biotype 1 (strain ATCC 23456 / CCUG 17765 / NCTC 10094 / 16M)</name>
    <dbReference type="NCBI Taxonomy" id="224914"/>
    <lineage>
        <taxon>Bacteria</taxon>
        <taxon>Pseudomonadati</taxon>
        <taxon>Pseudomonadota</taxon>
        <taxon>Alphaproteobacteria</taxon>
        <taxon>Hyphomicrobiales</taxon>
        <taxon>Brucellaceae</taxon>
        <taxon>Brucella/Ochrobactrum group</taxon>
        <taxon>Brucella</taxon>
    </lineage>
</organism>
<accession>Q8YI00</accession>